<name>RGI1_ARATH</name>
<sequence length="1141" mass="124504">MSLHSLIFFSSSSSSLLFSFFFIFIFCFSLSDAEQNPEASILYSWLHSSSPTPSSLSLFNWNSIDNTPCNNWTFITCSSQGFITDIDIESVPLQLSLPKNLPAFRSLQKLTISGANLTGTLPESLGDCLGLKVLDLSSNGLVGDIPWSLSKLRNLETLILNSNQLTGKIPPDISKCSKLKSLILFDNLLTGSIPTELGKLSGLEVIRIGGNKEISGQIPSEIGDCSNLTVLGLAETSVSGNLPSSLGKLKKLETLSIYTTMISGEIPSDLGNCSELVDLFLYENSLSGSIPREIGQLTKLEQLFLWQNSLVGGIPEEIGNCSNLKMIDLSLNLLSGSIPSSIGRLSFLEEFMISDNKFSGSIPTTISNCSSLVQLQLDKNQISGLIPSELGTLTKLTLFFAWSNQLEGSIPPGLADCTDLQALDLSRNSLTGTIPSGLFMLRNLTKLLLISNSLSGFIPQEIGNCSSLVRLRLGFNRITGEIPSGIGSLKKINFLDFSSNRLHGKVPDEIGSCSELQMIDLSNNSLEGSLPNPVSSLSGLQVLDVSANQFSGKIPASLGRLVSLNKLILSKNLFSGSIPTSLGMCSGLQLLDLGSNELSGEIPSELGDIENLEIALNLSSNRLTGKIPSKIASLNKLSILDLSHNMLEGDLAPLANIENLVSLNISYNSFSGYLPDNKLFRQLSPQDLEGNKKLCSSTQDSCFLTYRKGNGLGDDGDASRTRKLRLTLALLITLTVVLMILGAVAVIRARRNIDNERDSELGETYKWQFTPFQKLNFSVDQIIRCLVEPNVIGKGCSGVVYRADVDNGEVIAVKKLWPAMVNGGHDEKTKNVRDSFSAEVKTLGTIRHKNIVRFLGCCWNRNTRLLMYDYMPNGSLGSLLHERRGSSLDWDLRYRILLGAAQGLAYLHHDCLPPIVHRDIKANNILIGLDFEPYIADFGLAKLVDEGDIGRCSNTVAGSYGYIAPEYGYSMKITEKSDVYSYGVVVLEVLTGKQPIDPTVPEGIHLVDWVRQNRGSLEVLDSTLRSRTEAEADEMMQVLGTALLCVNSSPDERPTMKDVAAMLKEIKQEREEYAKVDLLLKKSPPPTTTMQEECRKNEMMMIPAAAASSSKEMRREERLLKSNNTSFSASSLLYSSSSSIE</sequence>
<organism>
    <name type="scientific">Arabidopsis thaliana</name>
    <name type="common">Mouse-ear cress</name>
    <dbReference type="NCBI Taxonomy" id="3702"/>
    <lineage>
        <taxon>Eukaryota</taxon>
        <taxon>Viridiplantae</taxon>
        <taxon>Streptophyta</taxon>
        <taxon>Embryophyta</taxon>
        <taxon>Tracheophyta</taxon>
        <taxon>Spermatophyta</taxon>
        <taxon>Magnoliopsida</taxon>
        <taxon>eudicotyledons</taxon>
        <taxon>Gunneridae</taxon>
        <taxon>Pentapetalae</taxon>
        <taxon>rosids</taxon>
        <taxon>malvids</taxon>
        <taxon>Brassicales</taxon>
        <taxon>Brassicaceae</taxon>
        <taxon>Camelineae</taxon>
        <taxon>Arabidopsis</taxon>
    </lineage>
</organism>
<keyword id="KW-0067">ATP-binding</keyword>
<keyword id="KW-1003">Cell membrane</keyword>
<keyword id="KW-1015">Disulfide bond</keyword>
<keyword id="KW-0325">Glycoprotein</keyword>
<keyword id="KW-0945">Host-virus interaction</keyword>
<keyword id="KW-0418">Kinase</keyword>
<keyword id="KW-0433">Leucine-rich repeat</keyword>
<keyword id="KW-0472">Membrane</keyword>
<keyword id="KW-0547">Nucleotide-binding</keyword>
<keyword id="KW-0597">Phosphoprotein</keyword>
<keyword id="KW-0675">Receptor</keyword>
<keyword id="KW-1185">Reference proteome</keyword>
<keyword id="KW-0677">Repeat</keyword>
<keyword id="KW-0723">Serine/threonine-protein kinase</keyword>
<keyword id="KW-0732">Signal</keyword>
<keyword id="KW-0808">Transferase</keyword>
<keyword id="KW-0812">Transmembrane</keyword>
<keyword id="KW-1133">Transmembrane helix</keyword>
<keyword id="KW-0832">Ubl conjugation</keyword>
<comment type="function">
    <text evidence="10 11 12">Together with RGI2, RGI3, RGI4 and RGI5, acts as a receptor of RGF peptides (e.g. RGF1, GLV5/CLEL1/RGF2, GLV7/CLEL3/RGF3, GLV3/RGF4, GLV10/CLEL7/RGF5 and RGF10/CLELN), peptide hormones which maintain the postembryonic root stem cell niche by regulating the expression levels and patterns of the transcription factor PLETHORA (PLT, e.g. PLT1 and PLT2) (PubMed:27001831, PubMed:27229311, PubMed:27229312). Links RGF peptides signal with their downstream components (PubMed:27001831, PubMed:27229311).</text>
</comment>
<comment type="catalytic activity">
    <reaction evidence="7">
        <text>L-seryl-[protein] + ATP = O-phospho-L-seryl-[protein] + ADP + H(+)</text>
        <dbReference type="Rhea" id="RHEA:17989"/>
        <dbReference type="Rhea" id="RHEA-COMP:9863"/>
        <dbReference type="Rhea" id="RHEA-COMP:11604"/>
        <dbReference type="ChEBI" id="CHEBI:15378"/>
        <dbReference type="ChEBI" id="CHEBI:29999"/>
        <dbReference type="ChEBI" id="CHEBI:30616"/>
        <dbReference type="ChEBI" id="CHEBI:83421"/>
        <dbReference type="ChEBI" id="CHEBI:456216"/>
        <dbReference type="EC" id="2.7.11.1"/>
    </reaction>
</comment>
<comment type="catalytic activity">
    <reaction evidence="7">
        <text>L-threonyl-[protein] + ATP = O-phospho-L-threonyl-[protein] + ADP + H(+)</text>
        <dbReference type="Rhea" id="RHEA:46608"/>
        <dbReference type="Rhea" id="RHEA-COMP:11060"/>
        <dbReference type="Rhea" id="RHEA-COMP:11605"/>
        <dbReference type="ChEBI" id="CHEBI:15378"/>
        <dbReference type="ChEBI" id="CHEBI:30013"/>
        <dbReference type="ChEBI" id="CHEBI:30616"/>
        <dbReference type="ChEBI" id="CHEBI:61977"/>
        <dbReference type="ChEBI" id="CHEBI:456216"/>
        <dbReference type="EC" id="2.7.11.1"/>
    </reaction>
</comment>
<comment type="subunit">
    <text evidence="9 10 11 12 13">Interacts with beet curly top virus AL4/C4 (PubMed:17280695). Binds to RGF peptides such as RGF1, GLV5/CLEL1/RGF2, GLV7/CLEL3/RGF3, GLV3/RGF4, GLV10/CLEL7/RGF5 and RGF10/CLELN; these interactions trigger the formation of heterodimers with SERK1, SERK2 or BAK1/SERK3 via LRR regions (PubMed:27001831, PubMed:27229311, PubMed:27229312). Interacts with UBP13 (PubMed:29339500).</text>
</comment>
<comment type="interaction">
    <interactant intactId="EBI-20660903">
        <id>Q9LHP4</id>
    </interactant>
    <interactant intactId="EBI-17123993">
        <id>Q9LT96</id>
        <label>At5g49770</label>
    </interactant>
    <organismsDiffer>false</organismsDiffer>
    <experiments>2</experiments>
</comment>
<comment type="interaction">
    <interactant intactId="EBI-20660903">
        <id>Q9LHP4</id>
    </interactant>
    <interactant intactId="EBI-2292728">
        <id>Q9ZPS9</id>
        <label>BRL2</label>
    </interactant>
    <organismsDiffer>false</organismsDiffer>
    <experiments>4</experiments>
</comment>
<comment type="subcellular location">
    <subcellularLocation>
        <location evidence="6">Cell membrane</location>
        <topology evidence="6">Single-pass type I membrane protein</topology>
    </subcellularLocation>
</comment>
<comment type="tissue specificity">
    <text evidence="10 11">Expressed in roots.</text>
</comment>
<comment type="developmental stage">
    <text evidence="10 11">Present in the whole roots with a predominant expression in the proximal meristem, including the elongation zone, and a gradual decreases toward the differentiation zone.</text>
</comment>
<comment type="PTM">
    <text evidence="12 13">Phosphorylated and ubiquitinated upon interaction with RGF1, thus leading to activation a subsequent degradation (PubMed:27229312). Stabilized by UBP12 and UBP13-mediated deubiquitination (PubMed:29339500).</text>
</comment>
<comment type="PTM">
    <text evidence="3">Autophosphorylated.</text>
</comment>
<comment type="disruption phenotype">
    <text evidence="10 11 12">Smaller root meristem size and fewer root meristematic cortex cells, associated with shorter roots and a slighty reduced sensitivity to RGF1 (PubMed:27229311). Quintuple mutants rgi1 rgi2 rgi3 rgi4 rgi5 display a consistent short primary root phenotype with a small size of meristem associated with a total insensitivity to RGF1 and undetectable levels of PLT1 and PLT2 (PubMed:27229312). The triple mutant missing RGI1, RGI2 and RGI3 is insensitive to externally applied RGF peptides (e.g. RGF1 and RGF2) and has short roots characterized by a strong decrease in meristematic cell number and declined levels of PLT1 and PLT2 at the root tip (PubMed:27001831).</text>
</comment>
<comment type="similarity">
    <text evidence="7">Belongs to the protein kinase superfamily. Ser/Thr protein kinase family.</text>
</comment>
<comment type="sequence caution" evidence="19">
    <conflict type="frameshift">
        <sequence resource="EMBL-CDS" id="CAD79350"/>
    </conflict>
</comment>
<proteinExistence type="evidence at protein level"/>
<evidence type="ECO:0000250" key="1">
    <source>
        <dbReference type="UniProtKB" id="C0LGR3"/>
    </source>
</evidence>
<evidence type="ECO:0000250" key="2">
    <source>
        <dbReference type="UniProtKB" id="C0LGT6"/>
    </source>
</evidence>
<evidence type="ECO:0000250" key="3">
    <source>
        <dbReference type="UniProtKB" id="O22476"/>
    </source>
</evidence>
<evidence type="ECO:0000250" key="4">
    <source>
        <dbReference type="UniProtKB" id="Q94AG2"/>
    </source>
</evidence>
<evidence type="ECO:0000250" key="5">
    <source>
        <dbReference type="UniProtKB" id="Q9M0G7"/>
    </source>
</evidence>
<evidence type="ECO:0000255" key="6"/>
<evidence type="ECO:0000255" key="7">
    <source>
        <dbReference type="PROSITE-ProRule" id="PRU00159"/>
    </source>
</evidence>
<evidence type="ECO:0000255" key="8">
    <source>
        <dbReference type="PROSITE-ProRule" id="PRU00498"/>
    </source>
</evidence>
<evidence type="ECO:0000269" key="9">
    <source>
    </source>
</evidence>
<evidence type="ECO:0000269" key="10">
    <source>
    </source>
</evidence>
<evidence type="ECO:0000269" key="11">
    <source>
    </source>
</evidence>
<evidence type="ECO:0000269" key="12">
    <source>
    </source>
</evidence>
<evidence type="ECO:0000269" key="13">
    <source>
    </source>
</evidence>
<evidence type="ECO:0000303" key="14">
    <source>
    </source>
</evidence>
<evidence type="ECO:0000303" key="15">
    <source>
    </source>
</evidence>
<evidence type="ECO:0000303" key="16">
    <source>
    </source>
</evidence>
<evidence type="ECO:0000303" key="17">
    <source>
    </source>
</evidence>
<evidence type="ECO:0000303" key="18">
    <source ref="1"/>
</evidence>
<evidence type="ECO:0000305" key="19"/>
<evidence type="ECO:0000312" key="20">
    <source>
        <dbReference type="Araport" id="AT3G24240"/>
    </source>
</evidence>
<evidence type="ECO:0000312" key="21">
    <source>
        <dbReference type="EMBL" id="BAB03091.1"/>
    </source>
</evidence>
<evidence type="ECO:0000312" key="22">
    <source>
        <dbReference type="EMBL" id="CAD79350.1"/>
    </source>
</evidence>
<gene>
    <name evidence="16" type="primary">RGI1</name>
    <name evidence="18" type="synonym">RCH2</name>
    <name evidence="14 17" type="synonym">RGFR1</name>
    <name evidence="15" type="synonym">RGFR4</name>
    <name evidence="20" type="ordered locus">At3g24240</name>
    <name evidence="21" type="ORF">K13K6.1</name>
</gene>
<dbReference type="EC" id="2.7.11.1" evidence="7"/>
<dbReference type="EMBL" id="AJ550163">
    <property type="protein sequence ID" value="CAD79350.1"/>
    <property type="status" value="ALT_FRAME"/>
    <property type="molecule type" value="mRNA"/>
</dbReference>
<dbReference type="EMBL" id="AP002037">
    <property type="protein sequence ID" value="BAB03091.1"/>
    <property type="molecule type" value="Genomic_DNA"/>
</dbReference>
<dbReference type="EMBL" id="AB028621">
    <property type="protein sequence ID" value="BAB03091.1"/>
    <property type="status" value="JOINED"/>
    <property type="molecule type" value="Genomic_DNA"/>
</dbReference>
<dbReference type="EMBL" id="CP002686">
    <property type="protein sequence ID" value="AEE76878.1"/>
    <property type="molecule type" value="Genomic_DNA"/>
</dbReference>
<dbReference type="RefSeq" id="NP_189066.1">
    <property type="nucleotide sequence ID" value="NM_113329.3"/>
</dbReference>
<dbReference type="SMR" id="Q9LHP4"/>
<dbReference type="BioGRID" id="7343">
    <property type="interactions" value="18"/>
</dbReference>
<dbReference type="FunCoup" id="Q9LHP4">
    <property type="interactions" value="1"/>
</dbReference>
<dbReference type="IntAct" id="Q9LHP4">
    <property type="interactions" value="19"/>
</dbReference>
<dbReference type="STRING" id="3702.Q9LHP4"/>
<dbReference type="GlyCosmos" id="Q9LHP4">
    <property type="glycosylation" value="11 sites, No reported glycans"/>
</dbReference>
<dbReference type="GlyGen" id="Q9LHP4">
    <property type="glycosylation" value="13 sites"/>
</dbReference>
<dbReference type="PaxDb" id="3702-AT3G24240.1"/>
<dbReference type="ProteomicsDB" id="236514"/>
<dbReference type="EnsemblPlants" id="AT3G24240.1">
    <property type="protein sequence ID" value="AT3G24240.1"/>
    <property type="gene ID" value="AT3G24240"/>
</dbReference>
<dbReference type="GeneID" id="822011"/>
<dbReference type="Gramene" id="AT3G24240.1">
    <property type="protein sequence ID" value="AT3G24240.1"/>
    <property type="gene ID" value="AT3G24240"/>
</dbReference>
<dbReference type="KEGG" id="ath:AT3G24240"/>
<dbReference type="Araport" id="AT3G24240"/>
<dbReference type="TAIR" id="AT3G24240">
    <property type="gene designation" value="RGFR1"/>
</dbReference>
<dbReference type="eggNOG" id="ENOG502QQEU">
    <property type="taxonomic scope" value="Eukaryota"/>
</dbReference>
<dbReference type="HOGENOM" id="CLU_000288_22_1_1"/>
<dbReference type="InParanoid" id="Q9LHP4"/>
<dbReference type="OMA" id="NRDSCFL"/>
<dbReference type="PhylomeDB" id="Q9LHP4"/>
<dbReference type="PRO" id="PR:Q9LHP4"/>
<dbReference type="Proteomes" id="UP000006548">
    <property type="component" value="Chromosome 3"/>
</dbReference>
<dbReference type="ExpressionAtlas" id="Q9LHP4">
    <property type="expression patterns" value="baseline and differential"/>
</dbReference>
<dbReference type="GO" id="GO:0005886">
    <property type="term" value="C:plasma membrane"/>
    <property type="evidence" value="ECO:0000314"/>
    <property type="project" value="TAIR"/>
</dbReference>
<dbReference type="GO" id="GO:0005524">
    <property type="term" value="F:ATP binding"/>
    <property type="evidence" value="ECO:0007669"/>
    <property type="project" value="UniProtKB-KW"/>
</dbReference>
<dbReference type="GO" id="GO:0042277">
    <property type="term" value="F:peptide binding"/>
    <property type="evidence" value="ECO:0000353"/>
    <property type="project" value="UniProtKB"/>
</dbReference>
<dbReference type="GO" id="GO:0001653">
    <property type="term" value="F:peptide receptor activity"/>
    <property type="evidence" value="ECO:0000315"/>
    <property type="project" value="UniProtKB"/>
</dbReference>
<dbReference type="GO" id="GO:0106310">
    <property type="term" value="F:protein serine kinase activity"/>
    <property type="evidence" value="ECO:0007669"/>
    <property type="project" value="RHEA"/>
</dbReference>
<dbReference type="GO" id="GO:0004674">
    <property type="term" value="F:protein serine/threonine kinase activity"/>
    <property type="evidence" value="ECO:0007669"/>
    <property type="project" value="UniProtKB-KW"/>
</dbReference>
<dbReference type="GO" id="GO:0010074">
    <property type="term" value="P:maintenance of meristem identity"/>
    <property type="evidence" value="ECO:0000315"/>
    <property type="project" value="UniProtKB"/>
</dbReference>
<dbReference type="GO" id="GO:0010078">
    <property type="term" value="P:maintenance of root meristem identity"/>
    <property type="evidence" value="ECO:0000315"/>
    <property type="project" value="UniProtKB"/>
</dbReference>
<dbReference type="GO" id="GO:2000280">
    <property type="term" value="P:regulation of root development"/>
    <property type="evidence" value="ECO:0000315"/>
    <property type="project" value="UniProtKB"/>
</dbReference>
<dbReference type="GO" id="GO:0010082">
    <property type="term" value="P:regulation of root meristem growth"/>
    <property type="evidence" value="ECO:0000316"/>
    <property type="project" value="TAIR"/>
</dbReference>
<dbReference type="GO" id="GO:0010449">
    <property type="term" value="P:root meristem growth"/>
    <property type="evidence" value="ECO:0000316"/>
    <property type="project" value="TAIR"/>
</dbReference>
<dbReference type="FunFam" id="1.10.510.10:FF:000276">
    <property type="entry name" value="LRR receptor-like serine/threonine-protein kinase RCH1"/>
    <property type="match status" value="1"/>
</dbReference>
<dbReference type="FunFam" id="3.30.200.20:FF:000748">
    <property type="entry name" value="LRR receptor-like serine/threonine-protein kinase RCH1"/>
    <property type="match status" value="1"/>
</dbReference>
<dbReference type="FunFam" id="3.80.10.10:FF:000333">
    <property type="entry name" value="LRR receptor-like serine/threonine-protein kinase RCH1"/>
    <property type="match status" value="1"/>
</dbReference>
<dbReference type="FunFam" id="3.80.10.10:FF:000400">
    <property type="entry name" value="Nuclear pore complex protein NUP107"/>
    <property type="match status" value="1"/>
</dbReference>
<dbReference type="FunFam" id="3.80.10.10:FF:000775">
    <property type="entry name" value="Predicted protein"/>
    <property type="match status" value="2"/>
</dbReference>
<dbReference type="Gene3D" id="3.30.200.20">
    <property type="entry name" value="Phosphorylase Kinase, domain 1"/>
    <property type="match status" value="1"/>
</dbReference>
<dbReference type="Gene3D" id="3.80.10.10">
    <property type="entry name" value="Ribonuclease Inhibitor"/>
    <property type="match status" value="4"/>
</dbReference>
<dbReference type="Gene3D" id="1.10.510.10">
    <property type="entry name" value="Transferase(Phosphotransferase) domain 1"/>
    <property type="match status" value="1"/>
</dbReference>
<dbReference type="InterPro" id="IPR011009">
    <property type="entry name" value="Kinase-like_dom_sf"/>
</dbReference>
<dbReference type="InterPro" id="IPR001611">
    <property type="entry name" value="Leu-rich_rpt"/>
</dbReference>
<dbReference type="InterPro" id="IPR003591">
    <property type="entry name" value="Leu-rich_rpt_typical-subtyp"/>
</dbReference>
<dbReference type="InterPro" id="IPR032675">
    <property type="entry name" value="LRR_dom_sf"/>
</dbReference>
<dbReference type="InterPro" id="IPR055414">
    <property type="entry name" value="LRR_R13L4/SHOC2-like"/>
</dbReference>
<dbReference type="InterPro" id="IPR051716">
    <property type="entry name" value="Plant_RL_S/T_kinase"/>
</dbReference>
<dbReference type="InterPro" id="IPR000719">
    <property type="entry name" value="Prot_kinase_dom"/>
</dbReference>
<dbReference type="InterPro" id="IPR017441">
    <property type="entry name" value="Protein_kinase_ATP_BS"/>
</dbReference>
<dbReference type="InterPro" id="IPR008271">
    <property type="entry name" value="Ser/Thr_kinase_AS"/>
</dbReference>
<dbReference type="PANTHER" id="PTHR48053">
    <property type="entry name" value="LEUCINE RICH REPEAT FAMILY PROTEIN, EXPRESSED"/>
    <property type="match status" value="1"/>
</dbReference>
<dbReference type="PANTHER" id="PTHR48053:SF165">
    <property type="entry name" value="RECEPTOR-LIKE PROTEIN KINASE 2 ISOFORM X2"/>
    <property type="match status" value="1"/>
</dbReference>
<dbReference type="Pfam" id="PF00560">
    <property type="entry name" value="LRR_1"/>
    <property type="match status" value="8"/>
</dbReference>
<dbReference type="Pfam" id="PF23598">
    <property type="entry name" value="LRR_14"/>
    <property type="match status" value="1"/>
</dbReference>
<dbReference type="Pfam" id="PF13855">
    <property type="entry name" value="LRR_8"/>
    <property type="match status" value="1"/>
</dbReference>
<dbReference type="Pfam" id="PF00069">
    <property type="entry name" value="Pkinase"/>
    <property type="match status" value="1"/>
</dbReference>
<dbReference type="PRINTS" id="PR00019">
    <property type="entry name" value="LEURICHRPT"/>
</dbReference>
<dbReference type="SMART" id="SM00365">
    <property type="entry name" value="LRR_SD22"/>
    <property type="match status" value="4"/>
</dbReference>
<dbReference type="SMART" id="SM00369">
    <property type="entry name" value="LRR_TYP"/>
    <property type="match status" value="5"/>
</dbReference>
<dbReference type="SMART" id="SM00220">
    <property type="entry name" value="S_TKc"/>
    <property type="match status" value="1"/>
</dbReference>
<dbReference type="SUPFAM" id="SSF52058">
    <property type="entry name" value="L domain-like"/>
    <property type="match status" value="2"/>
</dbReference>
<dbReference type="SUPFAM" id="SSF56112">
    <property type="entry name" value="Protein kinase-like (PK-like)"/>
    <property type="match status" value="1"/>
</dbReference>
<dbReference type="PROSITE" id="PS00107">
    <property type="entry name" value="PROTEIN_KINASE_ATP"/>
    <property type="match status" value="1"/>
</dbReference>
<dbReference type="PROSITE" id="PS50011">
    <property type="entry name" value="PROTEIN_KINASE_DOM"/>
    <property type="match status" value="1"/>
</dbReference>
<dbReference type="PROSITE" id="PS00108">
    <property type="entry name" value="PROTEIN_KINASE_ST"/>
    <property type="match status" value="1"/>
</dbReference>
<accession>Q9LHP4</accession>
<accession>Q84RP5</accession>
<feature type="signal peptide" evidence="6">
    <location>
        <begin position="1"/>
        <end position="33"/>
    </location>
</feature>
<feature type="chain" id="PRO_0000287221" description="LRR receptor-like serine/threonine-protein kinase RGI1">
    <location>
        <begin position="34"/>
        <end position="1141"/>
    </location>
</feature>
<feature type="topological domain" description="Extracellular" evidence="6">
    <location>
        <begin position="34"/>
        <end position="726"/>
    </location>
</feature>
<feature type="transmembrane region" description="Helical" evidence="6">
    <location>
        <begin position="727"/>
        <end position="747"/>
    </location>
</feature>
<feature type="topological domain" description="Cytoplasmic" evidence="6">
    <location>
        <begin position="748"/>
        <end position="1141"/>
    </location>
</feature>
<feature type="repeat" description="LRR 1" evidence="6">
    <location>
        <begin position="80"/>
        <end position="104"/>
    </location>
</feature>
<feature type="repeat" description="LRR 2" evidence="6">
    <location>
        <begin position="105"/>
        <end position="128"/>
    </location>
</feature>
<feature type="repeat" description="LRR 3" evidence="6">
    <location>
        <begin position="130"/>
        <end position="152"/>
    </location>
</feature>
<feature type="repeat" description="LRR 4" evidence="6">
    <location>
        <begin position="153"/>
        <end position="176"/>
    </location>
</feature>
<feature type="repeat" description="LRR 5" evidence="6">
    <location>
        <begin position="178"/>
        <end position="200"/>
    </location>
</feature>
<feature type="repeat" description="LRR 6" evidence="6">
    <location>
        <begin position="202"/>
        <end position="225"/>
    </location>
</feature>
<feature type="repeat" description="LRR 7" evidence="6">
    <location>
        <begin position="226"/>
        <end position="249"/>
    </location>
</feature>
<feature type="repeat" description="LRR 8" evidence="6">
    <location>
        <begin position="250"/>
        <end position="273"/>
    </location>
</feature>
<feature type="repeat" description="LRR 9" evidence="6">
    <location>
        <begin position="275"/>
        <end position="297"/>
    </location>
</feature>
<feature type="repeat" description="LRR 10" evidence="6">
    <location>
        <begin position="298"/>
        <end position="321"/>
    </location>
</feature>
<feature type="repeat" description="LRR 11" evidence="6">
    <location>
        <begin position="322"/>
        <end position="345"/>
    </location>
</feature>
<feature type="repeat" description="LRR 12" evidence="6">
    <location>
        <begin position="347"/>
        <end position="369"/>
    </location>
</feature>
<feature type="repeat" description="LRR 13" evidence="6">
    <location>
        <begin position="370"/>
        <end position="392"/>
    </location>
</feature>
<feature type="repeat" description="LRR 14" evidence="6">
    <location>
        <begin position="394"/>
        <end position="417"/>
    </location>
</feature>
<feature type="repeat" description="LRR 15" evidence="6">
    <location>
        <begin position="418"/>
        <end position="441"/>
    </location>
</feature>
<feature type="repeat" description="LRR 16" evidence="6">
    <location>
        <begin position="443"/>
        <end position="464"/>
    </location>
</feature>
<feature type="repeat" description="LRR 17" evidence="6">
    <location>
        <begin position="465"/>
        <end position="489"/>
    </location>
</feature>
<feature type="repeat" description="LRR 18" evidence="6">
    <location>
        <begin position="490"/>
        <end position="513"/>
    </location>
</feature>
<feature type="repeat" description="LRR 19" evidence="6">
    <location>
        <begin position="514"/>
        <end position="537"/>
    </location>
</feature>
<feature type="repeat" description="LRR 20" evidence="6">
    <location>
        <begin position="538"/>
        <end position="561"/>
    </location>
</feature>
<feature type="repeat" description="LRR 21" evidence="6">
    <location>
        <begin position="563"/>
        <end position="585"/>
    </location>
</feature>
<feature type="repeat" description="LRR 22" evidence="6">
    <location>
        <begin position="586"/>
        <end position="609"/>
    </location>
</feature>
<feature type="repeat" description="LRR 23" evidence="6">
    <location>
        <begin position="610"/>
        <end position="634"/>
    </location>
</feature>
<feature type="repeat" description="LRR 24" evidence="6">
    <location>
        <begin position="636"/>
        <end position="657"/>
    </location>
</feature>
<feature type="repeat" description="LRR 25" evidence="6">
    <location>
        <begin position="658"/>
        <end position="682"/>
    </location>
</feature>
<feature type="domain" description="Protein kinase" evidence="7">
    <location>
        <begin position="786"/>
        <end position="1074"/>
    </location>
</feature>
<feature type="short sequence motif" description="Small peptide recognition" evidence="1">
    <location>
        <begin position="185"/>
        <end position="186"/>
    </location>
</feature>
<feature type="short sequence motif" description="Small peptide recognition" evidence="1">
    <location>
        <begin position="207"/>
        <end position="210"/>
    </location>
</feature>
<feature type="short sequence motif" description="Small peptide recognition" evidence="1">
    <location>
        <begin position="230"/>
        <end position="235"/>
    </location>
</feature>
<feature type="short sequence motif" description="Small peptide recognition" evidence="1">
    <location>
        <position position="258"/>
    </location>
</feature>
<feature type="short sequence motif" description="Small peptide recognition" evidence="1">
    <location>
        <begin position="280"/>
        <end position="282"/>
    </location>
</feature>
<feature type="short sequence motif" description="Small peptide recognition" evidence="1">
    <location>
        <begin position="328"/>
        <end position="331"/>
    </location>
</feature>
<feature type="short sequence motif" description="Small peptide recognition" evidence="1">
    <location>
        <begin position="350"/>
        <end position="352"/>
    </location>
</feature>
<feature type="short sequence motif" description="Small peptide recognition" evidence="1">
    <location>
        <begin position="398"/>
        <end position="402"/>
    </location>
</feature>
<feature type="short sequence motif" description="Small peptide recognition" evidence="1">
    <location>
        <begin position="424"/>
        <end position="427"/>
    </location>
</feature>
<feature type="short sequence motif" description="Small peptide recognition" evidence="1">
    <location>
        <begin position="446"/>
        <end position="450"/>
    </location>
</feature>
<feature type="short sequence motif" description="Small peptide recognition" evidence="1">
    <location>
        <begin position="470"/>
        <end position="472"/>
    </location>
</feature>
<feature type="active site" description="Proton acceptor" evidence="7">
    <location>
        <position position="919"/>
    </location>
</feature>
<feature type="binding site" evidence="7">
    <location>
        <begin position="792"/>
        <end position="800"/>
    </location>
    <ligand>
        <name>ATP</name>
        <dbReference type="ChEBI" id="CHEBI:30616"/>
    </ligand>
</feature>
<feature type="binding site" evidence="7">
    <location>
        <position position="814"/>
    </location>
    <ligand>
        <name>ATP</name>
        <dbReference type="ChEBI" id="CHEBI:30616"/>
    </ligand>
</feature>
<feature type="site" description="Essential for autophosphorylation activity" evidence="9">
    <location>
        <position position="814"/>
    </location>
</feature>
<feature type="modified residue" description="Phosphotyrosine" evidence="3">
    <location>
        <position position="868"/>
    </location>
</feature>
<feature type="modified residue" description="Phosphotyrosine" evidence="2">
    <location>
        <position position="906"/>
    </location>
</feature>
<feature type="modified residue" description="Phosphotyrosine" evidence="2">
    <location>
        <position position="962"/>
    </location>
</feature>
<feature type="modified residue" description="Phosphotyrosine" evidence="5">
    <location>
        <position position="969"/>
    </location>
</feature>
<feature type="glycosylation site" description="N-linked (GlcNAc...) asparagine" evidence="8">
    <location>
        <position position="71"/>
    </location>
</feature>
<feature type="glycosylation site" description="N-linked (GlcNAc...) asparagine" evidence="8">
    <location>
        <position position="116"/>
    </location>
</feature>
<feature type="glycosylation site" description="N-linked (GlcNAc...) asparagine" evidence="8">
    <location>
        <position position="227"/>
    </location>
</feature>
<feature type="glycosylation site" description="N-linked (GlcNAc...) asparagine" evidence="8">
    <location>
        <position position="272"/>
    </location>
</feature>
<feature type="glycosylation site" description="N-linked (GlcNAc...) asparagine" evidence="8">
    <location>
        <position position="320"/>
    </location>
</feature>
<feature type="glycosylation site" description="N-linked (GlcNAc...) asparagine" evidence="8">
    <location>
        <position position="368"/>
    </location>
</feature>
<feature type="glycosylation site" description="N-linked (GlcNAc...) asparagine" evidence="8">
    <location>
        <position position="443"/>
    </location>
</feature>
<feature type="glycosylation site" description="N-linked (GlcNAc...) asparagine" evidence="8">
    <location>
        <position position="464"/>
    </location>
</feature>
<feature type="glycosylation site" description="N-linked (GlcNAc...) asparagine" evidence="8">
    <location>
        <position position="523"/>
    </location>
</feature>
<feature type="glycosylation site" description="N-linked (GlcNAc...) asparagine" evidence="8">
    <location>
        <position position="617"/>
    </location>
</feature>
<feature type="glycosylation site" description="N-linked (GlcNAc...) asparagine" evidence="8">
    <location>
        <position position="664"/>
    </location>
</feature>
<feature type="disulfide bond" evidence="4">
    <location>
        <begin position="69"/>
        <end position="77"/>
    </location>
</feature>
<feature type="mutagenesis site" description="Lost autophosphorylation." evidence="9">
    <original>K</original>
    <variation>E</variation>
    <location>
        <position position="814"/>
    </location>
</feature>
<feature type="mutagenesis site" description="Normal autophosphorylation." evidence="9">
    <original>K</original>
    <variation>E</variation>
    <location>
        <position position="815"/>
    </location>
</feature>
<feature type="sequence conflict" description="In Ref. 1; CAD79350." evidence="19" ref="1">
    <original>S</original>
    <variation>L</variation>
    <location>
        <position position="220"/>
    </location>
</feature>
<protein>
    <recommendedName>
        <fullName evidence="16">LRR receptor-like serine/threonine-protein kinase RGI1</fullName>
        <ecNumber evidence="7">2.7.11.1</ecNumber>
    </recommendedName>
    <alternativeName>
        <fullName evidence="15">Protein RECEPTOR OF RGF1 4</fullName>
    </alternativeName>
    <alternativeName>
        <fullName evidence="16">Protein RGF1 INSENSITIVE 1</fullName>
    </alternativeName>
    <alternativeName>
        <fullName evidence="18 22">Protein ROOT CLAVATA-HOMOLOG1 2</fullName>
    </alternativeName>
</protein>
<reference key="1">
    <citation type="submission" date="2003-03" db="EMBL/GenBank/DDBJ databases">
        <title>Receptor kinase signaling in Arabidopsis root meristem maintenance.</title>
        <authorList>
            <person name="Casamitjana-Martinez E."/>
        </authorList>
    </citation>
    <scope>NUCLEOTIDE SEQUENCE [MRNA]</scope>
    <source>
        <strain>cv. Columbia</strain>
    </source>
</reference>
<reference key="2">
    <citation type="journal article" date="2000" name="DNA Res.">
        <title>Structural analysis of Arabidopsis thaliana chromosome 3. II. Sequence features of the 4,251,695 bp regions covered by 90 P1, TAC and BAC clones.</title>
        <authorList>
            <person name="Kaneko T."/>
            <person name="Katoh T."/>
            <person name="Sato S."/>
            <person name="Nakamura Y."/>
            <person name="Asamizu E."/>
            <person name="Tabata S."/>
        </authorList>
    </citation>
    <scope>NUCLEOTIDE SEQUENCE [LARGE SCALE GENOMIC DNA]</scope>
    <source>
        <strain>cv. Columbia</strain>
    </source>
</reference>
<reference key="3">
    <citation type="journal article" date="2000" name="DNA Res.">
        <title>Structural analysis of Arabidopsis thaliana chromosome 3. I. Sequence features of the regions of 4,504,864 bp covered by sixty P1 and TAC clones.</title>
        <authorList>
            <person name="Sato S."/>
            <person name="Nakamura Y."/>
            <person name="Kaneko T."/>
            <person name="Katoh T."/>
            <person name="Asamizu E."/>
            <person name="Tabata S."/>
        </authorList>
    </citation>
    <scope>NUCLEOTIDE SEQUENCE [LARGE SCALE GENOMIC DNA]</scope>
    <source>
        <strain>cv. Columbia</strain>
    </source>
</reference>
<reference key="4">
    <citation type="journal article" date="2017" name="Plant J.">
        <title>Araport11: a complete reannotation of the Arabidopsis thaliana reference genome.</title>
        <authorList>
            <person name="Cheng C.Y."/>
            <person name="Krishnakumar V."/>
            <person name="Chan A.P."/>
            <person name="Thibaud-Nissen F."/>
            <person name="Schobel S."/>
            <person name="Town C.D."/>
        </authorList>
    </citation>
    <scope>GENOME REANNOTATION</scope>
    <source>
        <strain>cv. Columbia</strain>
    </source>
</reference>
<reference key="5">
    <citation type="journal article" date="2007" name="Virology">
        <title>Geminivirus pathogenicity protein C4 interacts with Arabidopsis thaliana shaggy-related protein kinase AtSKeta, a component of the brassinosteroid signalling pathway.</title>
        <authorList>
            <person name="Piroux N."/>
            <person name="Saunders K."/>
            <person name="Page A."/>
            <person name="Stanley J."/>
        </authorList>
    </citation>
    <scope>INTERACTION WITH BEET CURLY TOP VIRUS C4</scope>
    <scope>AUTOPHOSPHORYLATION</scope>
</reference>
<reference key="6">
    <citation type="journal article" date="2016" name="Cell Res.">
        <title>Signature motif-guided identification of receptors for peptide hormones essential for root meristem growth.</title>
        <authorList>
            <person name="Song W."/>
            <person name="Liu L."/>
            <person name="Wang J."/>
            <person name="Wu Z."/>
            <person name="Zhang H."/>
            <person name="Tang J."/>
            <person name="Lin G."/>
            <person name="Wang Y."/>
            <person name="Wen X."/>
            <person name="Li W."/>
            <person name="Han Z."/>
            <person name="Guo H."/>
            <person name="Chai J."/>
        </authorList>
    </citation>
    <scope>FUNCTION</scope>
    <scope>DISRUPTION PHENOTYPE</scope>
    <scope>TISSUE SPECIFICITY</scope>
    <scope>DEVELOPMENTAL STAGE</scope>
    <scope>INTERACTION WITH RGF1</scope>
    <scope>GENE FAMILY</scope>
    <scope>NOMENCLATURE</scope>
    <source>
        <strain>cv. Columbia</strain>
    </source>
</reference>
<reference key="7">
    <citation type="journal article" date="2016" name="Cell Res.">
        <title>RGF1 INSENSITIVE 1 to 5, a group of LRR receptor-like kinases, are essential for the perception of root meristem growth factor 1 in Arabidopsis thaliana.</title>
        <authorList>
            <person name="Ou Y."/>
            <person name="Lu X."/>
            <person name="Zi Q."/>
            <person name="Xun Q."/>
            <person name="Zhang J."/>
            <person name="Wu Y."/>
            <person name="Shi H."/>
            <person name="Wei Z."/>
            <person name="Zhao B."/>
            <person name="Zhang X."/>
            <person name="He K."/>
            <person name="Gou X."/>
            <person name="Li C."/>
            <person name="Li J."/>
        </authorList>
    </citation>
    <scope>FUNCTION</scope>
    <scope>MUTAGENESIS OF LYS-814 AND LYS-815</scope>
    <scope>DISRUPTION PHENOTYPE</scope>
    <scope>INTERACTION WITH RGF1</scope>
    <scope>PHOSPHORYLATION</scope>
    <scope>UBIQUITINATION</scope>
    <source>
        <strain>cv. Columbia</strain>
    </source>
</reference>
<reference key="8">
    <citation type="journal article" date="2016" name="Proc. Natl. Acad. Sci. U.S.A.">
        <title>Identification of three LRR-RKs involved in perception of root meristem growth factor in Arabidopsis.</title>
        <authorList>
            <person name="Shinohara H."/>
            <person name="Mori A."/>
            <person name="Yasue N."/>
            <person name="Sumida K."/>
            <person name="Matsubayashi Y."/>
        </authorList>
    </citation>
    <scope>FUNCTION</scope>
    <scope>DISRUPTION PHENOTYPE</scope>
    <scope>INTERACTION WITH RGF1; GLV5/CLEL1/RGF2; GLV7/CLEL3/RGF3; GLV3/RGF4; GLV10/CLEL7/RGF5 AND RGF10/CLELN</scope>
    <scope>TISSUE SPECIFICITY</scope>
    <scope>DEVELOPMENTAL STAGE</scope>
    <source>
        <strain>cv. Columbia</strain>
    </source>
</reference>
<reference key="9">
    <citation type="journal article" date="2018" name="Proc. Natl. Acad. Sci. U.S.A.">
        <title>Regulation of the stability of RGF1 receptor by the ubiquitin-specific proteases UBP12/UBP13 is critical for root meristem maintenance.</title>
        <authorList>
            <person name="An Z."/>
            <person name="Liu Y."/>
            <person name="Ou Y."/>
            <person name="Li J."/>
            <person name="Zhang B."/>
            <person name="Sun D."/>
            <person name="Sun Y."/>
            <person name="Tang W."/>
        </authorList>
    </citation>
    <scope>INTERACTION WITH UBP13</scope>
    <scope>PTM</scope>
    <source>
        <strain>cv. Columbia</strain>
    </source>
</reference>